<geneLocation type="chloroplast"/>
<organism>
    <name type="scientific">Solanum lycopersicum</name>
    <name type="common">Tomato</name>
    <name type="synonym">Lycopersicon esculentum</name>
    <dbReference type="NCBI Taxonomy" id="4081"/>
    <lineage>
        <taxon>Eukaryota</taxon>
        <taxon>Viridiplantae</taxon>
        <taxon>Streptophyta</taxon>
        <taxon>Embryophyta</taxon>
        <taxon>Tracheophyta</taxon>
        <taxon>Spermatophyta</taxon>
        <taxon>Magnoliopsida</taxon>
        <taxon>eudicotyledons</taxon>
        <taxon>Gunneridae</taxon>
        <taxon>Pentapetalae</taxon>
        <taxon>asterids</taxon>
        <taxon>lamiids</taxon>
        <taxon>Solanales</taxon>
        <taxon>Solanaceae</taxon>
        <taxon>Solanoideae</taxon>
        <taxon>Solaneae</taxon>
        <taxon>Solanum</taxon>
        <taxon>Solanum subgen. Lycopersicon</taxon>
    </lineage>
</organism>
<keyword id="KW-0150">Chloroplast</keyword>
<keyword id="KW-0249">Electron transport</keyword>
<keyword id="KW-0349">Heme</keyword>
<keyword id="KW-0408">Iron</keyword>
<keyword id="KW-0472">Membrane</keyword>
<keyword id="KW-0479">Metal-binding</keyword>
<keyword id="KW-0602">Photosynthesis</keyword>
<keyword id="KW-0604">Photosystem II</keyword>
<keyword id="KW-0934">Plastid</keyword>
<keyword id="KW-1185">Reference proteome</keyword>
<keyword id="KW-0793">Thylakoid</keyword>
<keyword id="KW-0812">Transmembrane</keyword>
<keyword id="KW-1133">Transmembrane helix</keyword>
<keyword id="KW-0813">Transport</keyword>
<comment type="function">
    <text evidence="1">This b-type cytochrome is tightly associated with the reaction center of photosystem II (PSII). PSII is a light-driven water:plastoquinone oxidoreductase that uses light energy to abstract electrons from H(2)O, generating O(2) and a proton gradient subsequently used for ATP formation. It consists of a core antenna complex that captures photons, and an electron transfer chain that converts photonic excitation into a charge separation.</text>
</comment>
<comment type="cofactor">
    <cofactor evidence="1">
        <name>heme b</name>
        <dbReference type="ChEBI" id="CHEBI:60344"/>
    </cofactor>
    <text evidence="1">With its partner (PsbF) binds heme. PSII binds additional chlorophylls, carotenoids and specific lipids.</text>
</comment>
<comment type="subunit">
    <text evidence="1">Heterodimer of an alpha subunit and a beta subunit. PSII is composed of 1 copy each of membrane proteins PsbA, PsbB, PsbC, PsbD, PsbE, PsbF, PsbH, PsbI, PsbJ, PsbK, PsbL, PsbM, PsbT, PsbX, PsbY, PsbZ, Psb30/Ycf12, at least 3 peripheral proteins of the oxygen-evolving complex and a large number of cofactors. It forms dimeric complexes.</text>
</comment>
<comment type="subcellular location">
    <subcellularLocation>
        <location evidence="1">Plastid</location>
        <location evidence="1">Chloroplast thylakoid membrane</location>
        <topology evidence="1">Single-pass membrane protein</topology>
    </subcellularLocation>
</comment>
<comment type="similarity">
    <text evidence="1">Belongs to the PsbE/PsbF family.</text>
</comment>
<evidence type="ECO:0000255" key="1">
    <source>
        <dbReference type="HAMAP-Rule" id="MF_00642"/>
    </source>
</evidence>
<proteinExistence type="inferred from homology"/>
<protein>
    <recommendedName>
        <fullName evidence="1">Cytochrome b559 subunit alpha</fullName>
    </recommendedName>
    <alternativeName>
        <fullName evidence="1">PSII reaction center subunit V</fullName>
    </alternativeName>
</protein>
<dbReference type="EMBL" id="DQ347959">
    <property type="protein sequence ID" value="ABC56317.1"/>
    <property type="molecule type" value="Genomic_DNA"/>
</dbReference>
<dbReference type="EMBL" id="AM087200">
    <property type="protein sequence ID" value="CAJ32410.1"/>
    <property type="molecule type" value="Genomic_DNA"/>
</dbReference>
<dbReference type="RefSeq" id="AP_004945.1">
    <property type="nucleotide sequence ID" value="AC_000188.1"/>
</dbReference>
<dbReference type="RefSeq" id="YP_008563105.1">
    <property type="nucleotide sequence ID" value="NC_007898.3"/>
</dbReference>
<dbReference type="SMR" id="Q2MI83"/>
<dbReference type="FunCoup" id="Q2MI83">
    <property type="interactions" value="23"/>
</dbReference>
<dbReference type="STRING" id="4081.Q2MI83"/>
<dbReference type="GeneID" id="3950399"/>
<dbReference type="KEGG" id="sly:3950399"/>
<dbReference type="InParanoid" id="Q2MI83"/>
<dbReference type="OrthoDB" id="1245051at2759"/>
<dbReference type="Proteomes" id="UP000004994">
    <property type="component" value="Chloroplast"/>
</dbReference>
<dbReference type="GO" id="GO:0009535">
    <property type="term" value="C:chloroplast thylakoid membrane"/>
    <property type="evidence" value="ECO:0007669"/>
    <property type="project" value="UniProtKB-SubCell"/>
</dbReference>
<dbReference type="GO" id="GO:0009539">
    <property type="term" value="C:photosystem II reaction center"/>
    <property type="evidence" value="ECO:0007669"/>
    <property type="project" value="InterPro"/>
</dbReference>
<dbReference type="GO" id="GO:0009055">
    <property type="term" value="F:electron transfer activity"/>
    <property type="evidence" value="ECO:0007669"/>
    <property type="project" value="UniProtKB-UniRule"/>
</dbReference>
<dbReference type="GO" id="GO:0020037">
    <property type="term" value="F:heme binding"/>
    <property type="evidence" value="ECO:0007669"/>
    <property type="project" value="InterPro"/>
</dbReference>
<dbReference type="GO" id="GO:0005506">
    <property type="term" value="F:iron ion binding"/>
    <property type="evidence" value="ECO:0007669"/>
    <property type="project" value="UniProtKB-UniRule"/>
</dbReference>
<dbReference type="GO" id="GO:0009767">
    <property type="term" value="P:photosynthetic electron transport chain"/>
    <property type="evidence" value="ECO:0007669"/>
    <property type="project" value="InterPro"/>
</dbReference>
<dbReference type="Gene3D" id="1.20.5.860">
    <property type="entry name" value="Photosystem II cytochrome b559, alpha subunit"/>
    <property type="match status" value="1"/>
</dbReference>
<dbReference type="HAMAP" id="MF_00642">
    <property type="entry name" value="PSII_PsbE"/>
    <property type="match status" value="1"/>
</dbReference>
<dbReference type="InterPro" id="IPR006217">
    <property type="entry name" value="PSII_cyt_b559_asu"/>
</dbReference>
<dbReference type="InterPro" id="IPR037025">
    <property type="entry name" value="PSII_cyt_b559_asu_sf"/>
</dbReference>
<dbReference type="InterPro" id="IPR006216">
    <property type="entry name" value="PSII_cyt_b559_CS"/>
</dbReference>
<dbReference type="InterPro" id="IPR013081">
    <property type="entry name" value="PSII_cyt_b559_N"/>
</dbReference>
<dbReference type="InterPro" id="IPR013082">
    <property type="entry name" value="PSII_cytb559_asu_lum"/>
</dbReference>
<dbReference type="NCBIfam" id="TIGR01332">
    <property type="entry name" value="cyt_b559_alpha"/>
    <property type="match status" value="1"/>
</dbReference>
<dbReference type="PANTHER" id="PTHR33391">
    <property type="entry name" value="CYTOCHROME B559 SUBUNIT BETA-RELATED"/>
    <property type="match status" value="1"/>
</dbReference>
<dbReference type="PANTHER" id="PTHR33391:SF9">
    <property type="entry name" value="CYTOCHROME B559 SUBUNIT BETA-RELATED"/>
    <property type="match status" value="1"/>
</dbReference>
<dbReference type="Pfam" id="PF00283">
    <property type="entry name" value="Cytochrom_B559"/>
    <property type="match status" value="1"/>
</dbReference>
<dbReference type="Pfam" id="PF00284">
    <property type="entry name" value="Cytochrom_B559a"/>
    <property type="match status" value="1"/>
</dbReference>
<dbReference type="PIRSF" id="PIRSF000036">
    <property type="entry name" value="PsbE"/>
    <property type="match status" value="1"/>
</dbReference>
<dbReference type="SUPFAM" id="SSF161045">
    <property type="entry name" value="Cytochrome b559 subunits"/>
    <property type="match status" value="1"/>
</dbReference>
<dbReference type="PROSITE" id="PS00537">
    <property type="entry name" value="CYTOCHROME_B559"/>
    <property type="match status" value="1"/>
</dbReference>
<gene>
    <name evidence="1" type="primary">psbE</name>
</gene>
<sequence length="83" mass="9397">MSGSTGERSFADIITSIRYWVIHSITIPSLFIAGWLFVSTGLAYDVFGSPRPNEYFTESRQGIPLITGRFDPLEQLDEFSRSF</sequence>
<reference key="1">
    <citation type="journal article" date="2006" name="Theor. Appl. Genet.">
        <title>Complete chloroplast genome sequences of Solanum bulbocastanum, Solanum lycopersicum and comparative analyses with other Solanaceae genomes.</title>
        <authorList>
            <person name="Daniell H."/>
            <person name="Lee S.-B."/>
            <person name="Grevich J."/>
            <person name="Saski C."/>
            <person name="Quesada-Vargas T."/>
            <person name="Guda C."/>
            <person name="Tomkins J."/>
            <person name="Jansen R.K."/>
        </authorList>
    </citation>
    <scope>NUCLEOTIDE SEQUENCE [LARGE SCALE GENOMIC DNA]</scope>
    <source>
        <strain>cv. LA3023</strain>
    </source>
</reference>
<reference key="2">
    <citation type="journal article" date="2006" name="J. Mol. Evol.">
        <title>Sequence of the tomato chloroplast DNA and evolutionary comparison of solanaceous plastid genomes.</title>
        <authorList>
            <person name="Kahlau S."/>
            <person name="Aspinall S."/>
            <person name="Gray J.C."/>
            <person name="Bock R."/>
        </authorList>
    </citation>
    <scope>NUCLEOTIDE SEQUENCE [LARGE SCALE GENOMIC DNA]</scope>
    <source>
        <strain>cv. IPA-6</strain>
    </source>
</reference>
<feature type="chain" id="PRO_0000233205" description="Cytochrome b559 subunit alpha">
    <location>
        <begin position="1"/>
        <end position="83"/>
    </location>
</feature>
<feature type="transmembrane region" description="Helical" evidence="1">
    <location>
        <begin position="21"/>
        <end position="35"/>
    </location>
</feature>
<feature type="binding site" description="axial binding residue" evidence="1">
    <location>
        <position position="23"/>
    </location>
    <ligand>
        <name>heme</name>
        <dbReference type="ChEBI" id="CHEBI:30413"/>
        <note>ligand shared with beta subunit</note>
    </ligand>
    <ligandPart>
        <name>Fe</name>
        <dbReference type="ChEBI" id="CHEBI:18248"/>
    </ligandPart>
</feature>
<accession>Q2MI83</accession>
<name>PSBE_SOLLC</name>